<sequence>MYALIRQLLFRLEPEQAHRVSMQLARLGLRIAAVPGVRSLPAVPRRVMGIDFPNPVGLAAGFDKDGEYMDVLEQLGFGFLELGTVTPRAQPGNPQPRVFRIPEHEALINRMGFNNQGAEPLVRRLEVSRHRGVVGINIGKNRDTPPERAVEDYAQALGMVYGVADYVAVNLSSPNTPGLRDLQHEGALRNLIDRLQTERKRLAELHDKRVPLVVKIAPDWEAGELDATLDILLERRVDGIVATNTTLGRTGVEQTPQARESGGLSGAPLREQAEWVLEQVAARRDRRTALIAAGGIMSGEDVTRRLDLGADLVQLYTGMIYRGPGLVQEAVRAAARHAGQPA</sequence>
<name>PYRD_HALHL</name>
<feature type="chain" id="PRO_0000336469" description="Dihydroorotate dehydrogenase (quinone)">
    <location>
        <begin position="1"/>
        <end position="342"/>
    </location>
</feature>
<feature type="active site" description="Nucleophile" evidence="1">
    <location>
        <position position="173"/>
    </location>
</feature>
<feature type="binding site" evidence="1">
    <location>
        <begin position="60"/>
        <end position="64"/>
    </location>
    <ligand>
        <name>FMN</name>
        <dbReference type="ChEBI" id="CHEBI:58210"/>
    </ligand>
</feature>
<feature type="binding site" evidence="1">
    <location>
        <position position="64"/>
    </location>
    <ligand>
        <name>substrate</name>
    </ligand>
</feature>
<feature type="binding site" evidence="1">
    <location>
        <position position="84"/>
    </location>
    <ligand>
        <name>FMN</name>
        <dbReference type="ChEBI" id="CHEBI:58210"/>
    </ligand>
</feature>
<feature type="binding site" evidence="1">
    <location>
        <begin position="109"/>
        <end position="113"/>
    </location>
    <ligand>
        <name>substrate</name>
    </ligand>
</feature>
<feature type="binding site" evidence="1">
    <location>
        <position position="137"/>
    </location>
    <ligand>
        <name>FMN</name>
        <dbReference type="ChEBI" id="CHEBI:58210"/>
    </ligand>
</feature>
<feature type="binding site" evidence="1">
    <location>
        <position position="170"/>
    </location>
    <ligand>
        <name>FMN</name>
        <dbReference type="ChEBI" id="CHEBI:58210"/>
    </ligand>
</feature>
<feature type="binding site" evidence="1">
    <location>
        <position position="170"/>
    </location>
    <ligand>
        <name>substrate</name>
    </ligand>
</feature>
<feature type="binding site" evidence="1">
    <location>
        <position position="175"/>
    </location>
    <ligand>
        <name>substrate</name>
    </ligand>
</feature>
<feature type="binding site" evidence="1">
    <location>
        <position position="215"/>
    </location>
    <ligand>
        <name>FMN</name>
        <dbReference type="ChEBI" id="CHEBI:58210"/>
    </ligand>
</feature>
<feature type="binding site" evidence="1">
    <location>
        <position position="243"/>
    </location>
    <ligand>
        <name>FMN</name>
        <dbReference type="ChEBI" id="CHEBI:58210"/>
    </ligand>
</feature>
<feature type="binding site" evidence="1">
    <location>
        <begin position="244"/>
        <end position="245"/>
    </location>
    <ligand>
        <name>substrate</name>
    </ligand>
</feature>
<feature type="binding site" evidence="1">
    <location>
        <position position="266"/>
    </location>
    <ligand>
        <name>FMN</name>
        <dbReference type="ChEBI" id="CHEBI:58210"/>
    </ligand>
</feature>
<feature type="binding site" evidence="1">
    <location>
        <position position="295"/>
    </location>
    <ligand>
        <name>FMN</name>
        <dbReference type="ChEBI" id="CHEBI:58210"/>
    </ligand>
</feature>
<feature type="binding site" evidence="1">
    <location>
        <begin position="316"/>
        <end position="317"/>
    </location>
    <ligand>
        <name>FMN</name>
        <dbReference type="ChEBI" id="CHEBI:58210"/>
    </ligand>
</feature>
<accession>A1WTJ3</accession>
<reference key="1">
    <citation type="submission" date="2006-12" db="EMBL/GenBank/DDBJ databases">
        <title>Complete sequence of Halorhodospira halophila SL1.</title>
        <authorList>
            <consortium name="US DOE Joint Genome Institute"/>
            <person name="Copeland A."/>
            <person name="Lucas S."/>
            <person name="Lapidus A."/>
            <person name="Barry K."/>
            <person name="Detter J.C."/>
            <person name="Glavina del Rio T."/>
            <person name="Hammon N."/>
            <person name="Israni S."/>
            <person name="Dalin E."/>
            <person name="Tice H."/>
            <person name="Pitluck S."/>
            <person name="Saunders E."/>
            <person name="Brettin T."/>
            <person name="Bruce D."/>
            <person name="Han C."/>
            <person name="Tapia R."/>
            <person name="Schmutz J."/>
            <person name="Larimer F."/>
            <person name="Land M."/>
            <person name="Hauser L."/>
            <person name="Kyrpides N."/>
            <person name="Mikhailova N."/>
            <person name="Hoff W."/>
            <person name="Richardson P."/>
        </authorList>
    </citation>
    <scope>NUCLEOTIDE SEQUENCE [LARGE SCALE GENOMIC DNA]</scope>
    <source>
        <strain>DSM 244 / SL1</strain>
    </source>
</reference>
<protein>
    <recommendedName>
        <fullName evidence="1">Dihydroorotate dehydrogenase (quinone)</fullName>
        <ecNumber evidence="1">1.3.5.2</ecNumber>
    </recommendedName>
    <alternativeName>
        <fullName evidence="1">DHOdehase</fullName>
        <shortName evidence="1">DHOD</shortName>
        <shortName evidence="1">DHODase</shortName>
    </alternativeName>
    <alternativeName>
        <fullName evidence="1">Dihydroorotate oxidase</fullName>
    </alternativeName>
</protein>
<keyword id="KW-1003">Cell membrane</keyword>
<keyword id="KW-0285">Flavoprotein</keyword>
<keyword id="KW-0288">FMN</keyword>
<keyword id="KW-0472">Membrane</keyword>
<keyword id="KW-0560">Oxidoreductase</keyword>
<keyword id="KW-0665">Pyrimidine biosynthesis</keyword>
<keyword id="KW-1185">Reference proteome</keyword>
<evidence type="ECO:0000255" key="1">
    <source>
        <dbReference type="HAMAP-Rule" id="MF_00225"/>
    </source>
</evidence>
<organism>
    <name type="scientific">Halorhodospira halophila (strain DSM 244 / SL1)</name>
    <name type="common">Ectothiorhodospira halophila (strain DSM 244 / SL1)</name>
    <dbReference type="NCBI Taxonomy" id="349124"/>
    <lineage>
        <taxon>Bacteria</taxon>
        <taxon>Pseudomonadati</taxon>
        <taxon>Pseudomonadota</taxon>
        <taxon>Gammaproteobacteria</taxon>
        <taxon>Chromatiales</taxon>
        <taxon>Ectothiorhodospiraceae</taxon>
        <taxon>Halorhodospira</taxon>
    </lineage>
</organism>
<dbReference type="EC" id="1.3.5.2" evidence="1"/>
<dbReference type="EMBL" id="CP000544">
    <property type="protein sequence ID" value="ABM61005.1"/>
    <property type="molecule type" value="Genomic_DNA"/>
</dbReference>
<dbReference type="RefSeq" id="WP_011813028.1">
    <property type="nucleotide sequence ID" value="NC_008789.1"/>
</dbReference>
<dbReference type="SMR" id="A1WTJ3"/>
<dbReference type="STRING" id="349124.Hhal_0211"/>
<dbReference type="KEGG" id="hha:Hhal_0211"/>
<dbReference type="eggNOG" id="COG0167">
    <property type="taxonomic scope" value="Bacteria"/>
</dbReference>
<dbReference type="HOGENOM" id="CLU_013640_2_0_6"/>
<dbReference type="OrthoDB" id="9802377at2"/>
<dbReference type="UniPathway" id="UPA00070">
    <property type="reaction ID" value="UER00946"/>
</dbReference>
<dbReference type="Proteomes" id="UP000000647">
    <property type="component" value="Chromosome"/>
</dbReference>
<dbReference type="GO" id="GO:0005737">
    <property type="term" value="C:cytoplasm"/>
    <property type="evidence" value="ECO:0007669"/>
    <property type="project" value="InterPro"/>
</dbReference>
<dbReference type="GO" id="GO:0005886">
    <property type="term" value="C:plasma membrane"/>
    <property type="evidence" value="ECO:0007669"/>
    <property type="project" value="UniProtKB-SubCell"/>
</dbReference>
<dbReference type="GO" id="GO:0106430">
    <property type="term" value="F:dihydroorotate dehydrogenase (quinone) activity"/>
    <property type="evidence" value="ECO:0007669"/>
    <property type="project" value="UniProtKB-EC"/>
</dbReference>
<dbReference type="GO" id="GO:0006207">
    <property type="term" value="P:'de novo' pyrimidine nucleobase biosynthetic process"/>
    <property type="evidence" value="ECO:0007669"/>
    <property type="project" value="InterPro"/>
</dbReference>
<dbReference type="GO" id="GO:0044205">
    <property type="term" value="P:'de novo' UMP biosynthetic process"/>
    <property type="evidence" value="ECO:0007669"/>
    <property type="project" value="UniProtKB-UniRule"/>
</dbReference>
<dbReference type="CDD" id="cd04738">
    <property type="entry name" value="DHOD_2_like"/>
    <property type="match status" value="1"/>
</dbReference>
<dbReference type="Gene3D" id="3.20.20.70">
    <property type="entry name" value="Aldolase class I"/>
    <property type="match status" value="1"/>
</dbReference>
<dbReference type="HAMAP" id="MF_00225">
    <property type="entry name" value="DHO_dh_type2"/>
    <property type="match status" value="1"/>
</dbReference>
<dbReference type="InterPro" id="IPR013785">
    <property type="entry name" value="Aldolase_TIM"/>
</dbReference>
<dbReference type="InterPro" id="IPR050074">
    <property type="entry name" value="DHO_dehydrogenase"/>
</dbReference>
<dbReference type="InterPro" id="IPR012135">
    <property type="entry name" value="Dihydroorotate_DH_1_2"/>
</dbReference>
<dbReference type="InterPro" id="IPR005719">
    <property type="entry name" value="Dihydroorotate_DH_2"/>
</dbReference>
<dbReference type="InterPro" id="IPR005720">
    <property type="entry name" value="Dihydroorotate_DH_cat"/>
</dbReference>
<dbReference type="InterPro" id="IPR001295">
    <property type="entry name" value="Dihydroorotate_DH_CS"/>
</dbReference>
<dbReference type="NCBIfam" id="NF003645">
    <property type="entry name" value="PRK05286.1-2"/>
    <property type="match status" value="1"/>
</dbReference>
<dbReference type="NCBIfam" id="NF003652">
    <property type="entry name" value="PRK05286.2-5"/>
    <property type="match status" value="1"/>
</dbReference>
<dbReference type="NCBIfam" id="TIGR01036">
    <property type="entry name" value="pyrD_sub2"/>
    <property type="match status" value="1"/>
</dbReference>
<dbReference type="PANTHER" id="PTHR48109:SF4">
    <property type="entry name" value="DIHYDROOROTATE DEHYDROGENASE (QUINONE), MITOCHONDRIAL"/>
    <property type="match status" value="1"/>
</dbReference>
<dbReference type="PANTHER" id="PTHR48109">
    <property type="entry name" value="DIHYDROOROTATE DEHYDROGENASE (QUINONE), MITOCHONDRIAL-RELATED"/>
    <property type="match status" value="1"/>
</dbReference>
<dbReference type="Pfam" id="PF01180">
    <property type="entry name" value="DHO_dh"/>
    <property type="match status" value="1"/>
</dbReference>
<dbReference type="PIRSF" id="PIRSF000164">
    <property type="entry name" value="DHO_oxidase"/>
    <property type="match status" value="1"/>
</dbReference>
<dbReference type="SUPFAM" id="SSF51395">
    <property type="entry name" value="FMN-linked oxidoreductases"/>
    <property type="match status" value="1"/>
</dbReference>
<dbReference type="PROSITE" id="PS00911">
    <property type="entry name" value="DHODEHASE_1"/>
    <property type="match status" value="1"/>
</dbReference>
<proteinExistence type="inferred from homology"/>
<gene>
    <name evidence="1" type="primary">pyrD</name>
    <name type="ordered locus">Hhal_0211</name>
</gene>
<comment type="function">
    <text evidence="1">Catalyzes the conversion of dihydroorotate to orotate with quinone as electron acceptor.</text>
</comment>
<comment type="catalytic activity">
    <reaction evidence="1">
        <text>(S)-dihydroorotate + a quinone = orotate + a quinol</text>
        <dbReference type="Rhea" id="RHEA:30187"/>
        <dbReference type="ChEBI" id="CHEBI:24646"/>
        <dbReference type="ChEBI" id="CHEBI:30839"/>
        <dbReference type="ChEBI" id="CHEBI:30864"/>
        <dbReference type="ChEBI" id="CHEBI:132124"/>
        <dbReference type="EC" id="1.3.5.2"/>
    </reaction>
</comment>
<comment type="cofactor">
    <cofactor evidence="1">
        <name>FMN</name>
        <dbReference type="ChEBI" id="CHEBI:58210"/>
    </cofactor>
    <text evidence="1">Binds 1 FMN per subunit.</text>
</comment>
<comment type="pathway">
    <text evidence="1">Pyrimidine metabolism; UMP biosynthesis via de novo pathway; orotate from (S)-dihydroorotate (quinone route): step 1/1.</text>
</comment>
<comment type="subunit">
    <text evidence="1">Monomer.</text>
</comment>
<comment type="subcellular location">
    <subcellularLocation>
        <location evidence="1">Cell membrane</location>
        <topology evidence="1">Peripheral membrane protein</topology>
    </subcellularLocation>
</comment>
<comment type="similarity">
    <text evidence="1">Belongs to the dihydroorotate dehydrogenase family. Type 2 subfamily.</text>
</comment>